<comment type="function">
    <text evidence="1">Catalyzes the decarboxylation of oxaloacetate into pyruvate. Seems to play a role in maintaining cellular concentrations of bicarbonate and pyruvate.</text>
</comment>
<comment type="catalytic activity">
    <reaction evidence="1">
        <text>oxaloacetate + H(+) = pyruvate + CO2</text>
        <dbReference type="Rhea" id="RHEA:15641"/>
        <dbReference type="ChEBI" id="CHEBI:15361"/>
        <dbReference type="ChEBI" id="CHEBI:15378"/>
        <dbReference type="ChEBI" id="CHEBI:16452"/>
        <dbReference type="ChEBI" id="CHEBI:16526"/>
        <dbReference type="EC" id="4.1.1.112"/>
    </reaction>
</comment>
<comment type="cofactor">
    <cofactor evidence="1">
        <name>Mg(2+)</name>
        <dbReference type="ChEBI" id="CHEBI:18420"/>
    </cofactor>
    <text evidence="1">Binds 1 Mg(2+) ion per subunit.</text>
</comment>
<comment type="subunit">
    <text evidence="1">Homotetramer; dimer of dimers.</text>
</comment>
<comment type="similarity">
    <text evidence="2">Belongs to the isocitrate lyase/PEP mutase superfamily. Oxaloacetate decarboxylase family.</text>
</comment>
<name>OADC_BRASO</name>
<sequence length="288" mass="30407">MTFRLRREALRTILTSDRCVNPGSVYDAISIRIAEDLGFPLGMFGGSAASLAILGDPDIALITLTELAEQMRRMSRAAVLPVLVDADHGYGNAMNVRRTVQELEAAGAAGLTIEDTSLPQAYGAAKPQLISLDEGVGKVKAALDGRGDSSLVILGRTGAVSITSLDDAIARARVYETCGVDGLFFTGITTRDQLDAIAAATNLPIVLGGAPEEMSDLGYLASRRVRIALQGHAPIAAATQAVYDTLKALRDGVSPKQLKGLPSAELTSRVMREADVKKRLRDFLGLGS</sequence>
<reference key="1">
    <citation type="journal article" date="2007" name="Science">
        <title>Legumes symbioses: absence of nod genes in photosynthetic bradyrhizobia.</title>
        <authorList>
            <person name="Giraud E."/>
            <person name="Moulin L."/>
            <person name="Vallenet D."/>
            <person name="Barbe V."/>
            <person name="Cytryn E."/>
            <person name="Avarre J.-C."/>
            <person name="Jaubert M."/>
            <person name="Simon D."/>
            <person name="Cartieaux F."/>
            <person name="Prin Y."/>
            <person name="Bena G."/>
            <person name="Hannibal L."/>
            <person name="Fardoux J."/>
            <person name="Kojadinovic M."/>
            <person name="Vuillet L."/>
            <person name="Lajus A."/>
            <person name="Cruveiller S."/>
            <person name="Rouy Z."/>
            <person name="Mangenot S."/>
            <person name="Segurens B."/>
            <person name="Dossat C."/>
            <person name="Franck W.L."/>
            <person name="Chang W.-S."/>
            <person name="Saunders E."/>
            <person name="Bruce D."/>
            <person name="Richardson P."/>
            <person name="Normand P."/>
            <person name="Dreyfus B."/>
            <person name="Pignol D."/>
            <person name="Stacey G."/>
            <person name="Emerich D."/>
            <person name="Vermeglio A."/>
            <person name="Medigue C."/>
            <person name="Sadowsky M."/>
        </authorList>
    </citation>
    <scope>NUCLEOTIDE SEQUENCE [LARGE SCALE GENOMIC DNA]</scope>
    <source>
        <strain>ORS 278</strain>
    </source>
</reference>
<proteinExistence type="inferred from homology"/>
<feature type="chain" id="PRO_0000364054" description="Oxaloacetate decarboxylase">
    <location>
        <begin position="1"/>
        <end position="288"/>
    </location>
</feature>
<feature type="binding site" evidence="1">
    <location>
        <position position="47"/>
    </location>
    <ligand>
        <name>substrate</name>
    </ligand>
</feature>
<feature type="binding site" evidence="1">
    <location>
        <position position="85"/>
    </location>
    <ligand>
        <name>Mg(2+)</name>
        <dbReference type="ChEBI" id="CHEBI:18420"/>
    </ligand>
</feature>
<feature type="binding site" evidence="1">
    <location>
        <position position="156"/>
    </location>
    <ligand>
        <name>substrate</name>
    </ligand>
</feature>
<feature type="binding site" evidence="1">
    <location>
        <position position="232"/>
    </location>
    <ligand>
        <name>substrate</name>
    </ligand>
</feature>
<protein>
    <recommendedName>
        <fullName evidence="1">Oxaloacetate decarboxylase</fullName>
        <ecNumber evidence="1">4.1.1.112</ecNumber>
    </recommendedName>
</protein>
<evidence type="ECO:0000255" key="1">
    <source>
        <dbReference type="HAMAP-Rule" id="MF_01299"/>
    </source>
</evidence>
<evidence type="ECO:0000305" key="2"/>
<keyword id="KW-0210">Decarboxylase</keyword>
<keyword id="KW-0456">Lyase</keyword>
<keyword id="KW-0460">Magnesium</keyword>
<keyword id="KW-0479">Metal-binding</keyword>
<keyword id="KW-1185">Reference proteome</keyword>
<organism>
    <name type="scientific">Bradyrhizobium sp. (strain ORS 278)</name>
    <dbReference type="NCBI Taxonomy" id="114615"/>
    <lineage>
        <taxon>Bacteria</taxon>
        <taxon>Pseudomonadati</taxon>
        <taxon>Pseudomonadota</taxon>
        <taxon>Alphaproteobacteria</taxon>
        <taxon>Hyphomicrobiales</taxon>
        <taxon>Nitrobacteraceae</taxon>
        <taxon>Bradyrhizobium</taxon>
    </lineage>
</organism>
<dbReference type="EC" id="4.1.1.112" evidence="1"/>
<dbReference type="EMBL" id="CU234118">
    <property type="protein sequence ID" value="CAL77047.1"/>
    <property type="molecule type" value="Genomic_DNA"/>
</dbReference>
<dbReference type="RefSeq" id="WP_011926207.1">
    <property type="nucleotide sequence ID" value="NC_009445.1"/>
</dbReference>
<dbReference type="SMR" id="A4YT21"/>
<dbReference type="STRING" id="114615.BRADO3250"/>
<dbReference type="KEGG" id="bra:BRADO3250"/>
<dbReference type="eggNOG" id="COG2513">
    <property type="taxonomic scope" value="Bacteria"/>
</dbReference>
<dbReference type="HOGENOM" id="CLU_027389_3_2_5"/>
<dbReference type="OrthoDB" id="9771433at2"/>
<dbReference type="Proteomes" id="UP000001994">
    <property type="component" value="Chromosome"/>
</dbReference>
<dbReference type="GO" id="GO:0000287">
    <property type="term" value="F:magnesium ion binding"/>
    <property type="evidence" value="ECO:0007669"/>
    <property type="project" value="UniProtKB-UniRule"/>
</dbReference>
<dbReference type="GO" id="GO:0046421">
    <property type="term" value="F:methylisocitrate lyase activity"/>
    <property type="evidence" value="ECO:0007669"/>
    <property type="project" value="TreeGrafter"/>
</dbReference>
<dbReference type="GO" id="GO:0008948">
    <property type="term" value="F:oxaloacetate decarboxylase activity"/>
    <property type="evidence" value="ECO:0007669"/>
    <property type="project" value="UniProtKB-UniRule"/>
</dbReference>
<dbReference type="GO" id="GO:0006107">
    <property type="term" value="P:oxaloacetate metabolic process"/>
    <property type="evidence" value="ECO:0007669"/>
    <property type="project" value="UniProtKB-UniRule"/>
</dbReference>
<dbReference type="GO" id="GO:0019629">
    <property type="term" value="P:propionate catabolic process, 2-methylcitrate cycle"/>
    <property type="evidence" value="ECO:0007669"/>
    <property type="project" value="TreeGrafter"/>
</dbReference>
<dbReference type="GO" id="GO:0042866">
    <property type="term" value="P:pyruvate biosynthetic process"/>
    <property type="evidence" value="ECO:0007669"/>
    <property type="project" value="UniProtKB-UniRule"/>
</dbReference>
<dbReference type="CDD" id="cd00377">
    <property type="entry name" value="ICL_PEPM"/>
    <property type="match status" value="1"/>
</dbReference>
<dbReference type="Gene3D" id="3.20.20.60">
    <property type="entry name" value="Phosphoenolpyruvate-binding domains"/>
    <property type="match status" value="1"/>
</dbReference>
<dbReference type="HAMAP" id="MF_01299">
    <property type="entry name" value="OadC"/>
    <property type="match status" value="1"/>
</dbReference>
<dbReference type="InterPro" id="IPR039556">
    <property type="entry name" value="ICL/PEPM"/>
</dbReference>
<dbReference type="InterPro" id="IPR023687">
    <property type="entry name" value="Oxaloacetate_deCOase_bac"/>
</dbReference>
<dbReference type="InterPro" id="IPR015813">
    <property type="entry name" value="Pyrv/PenolPyrv_kinase-like_dom"/>
</dbReference>
<dbReference type="InterPro" id="IPR040442">
    <property type="entry name" value="Pyrv_kinase-like_dom_sf"/>
</dbReference>
<dbReference type="PANTHER" id="PTHR42905:SF3">
    <property type="entry name" value="OXALOACETATE DECARBOXYLASE"/>
    <property type="match status" value="1"/>
</dbReference>
<dbReference type="PANTHER" id="PTHR42905">
    <property type="entry name" value="PHOSPHOENOLPYRUVATE CARBOXYLASE"/>
    <property type="match status" value="1"/>
</dbReference>
<dbReference type="Pfam" id="PF13714">
    <property type="entry name" value="PEP_mutase"/>
    <property type="match status" value="1"/>
</dbReference>
<dbReference type="SUPFAM" id="SSF51621">
    <property type="entry name" value="Phosphoenolpyruvate/pyruvate domain"/>
    <property type="match status" value="1"/>
</dbReference>
<gene>
    <name type="ordered locus">BRADO3250</name>
</gene>
<accession>A4YT21</accession>